<sequence length="157" mass="17892">MRTTIHKVITMMKGLIIVLKHAFQTPVTLRYPEEKRILPARSRGRHYLTKWNDGLERCVGCELCAIVCPAQAIYVKPAANEPGHIHSHGERYASDFQINMLRCIFCGYCEEACPTGAIVLSNQYELSAYTREDMIYTKDRLTEKTPGESGRDPSREI</sequence>
<proteinExistence type="inferred from homology"/>
<name>NUOI_PARUW</name>
<protein>
    <recommendedName>
        <fullName>NADH-quinone oxidoreductase subunit I</fullName>
        <ecNumber>7.1.1.-</ecNumber>
    </recommendedName>
    <alternativeName>
        <fullName>NADH dehydrogenase I subunit I</fullName>
    </alternativeName>
    <alternativeName>
        <fullName>NDH-1 subunit I</fullName>
    </alternativeName>
</protein>
<evidence type="ECO:0000250" key="1"/>
<evidence type="ECO:0000305" key="2"/>
<organism>
    <name type="scientific">Protochlamydia amoebophila (strain UWE25)</name>
    <dbReference type="NCBI Taxonomy" id="264201"/>
    <lineage>
        <taxon>Bacteria</taxon>
        <taxon>Pseudomonadati</taxon>
        <taxon>Chlamydiota</taxon>
        <taxon>Chlamydiia</taxon>
        <taxon>Parachlamydiales</taxon>
        <taxon>Parachlamydiaceae</taxon>
        <taxon>Candidatus Protochlamydia</taxon>
    </lineage>
</organism>
<dbReference type="EC" id="7.1.1.-"/>
<dbReference type="EMBL" id="BX908798">
    <property type="protein sequence ID" value="CAF23291.1"/>
    <property type="status" value="ALT_INIT"/>
    <property type="molecule type" value="Genomic_DNA"/>
</dbReference>
<dbReference type="RefSeq" id="WP_052278641.1">
    <property type="nucleotide sequence ID" value="NC_005861.2"/>
</dbReference>
<dbReference type="SMR" id="Q6MDQ8"/>
<dbReference type="STRING" id="264201.pc0567"/>
<dbReference type="eggNOG" id="COG1143">
    <property type="taxonomic scope" value="Bacteria"/>
</dbReference>
<dbReference type="HOGENOM" id="CLU_067218_4_3_0"/>
<dbReference type="OrthoDB" id="9803192at2"/>
<dbReference type="Proteomes" id="UP000000529">
    <property type="component" value="Chromosome"/>
</dbReference>
<dbReference type="GO" id="GO:0005886">
    <property type="term" value="C:plasma membrane"/>
    <property type="evidence" value="ECO:0007669"/>
    <property type="project" value="UniProtKB-SubCell"/>
</dbReference>
<dbReference type="GO" id="GO:0051539">
    <property type="term" value="F:4 iron, 4 sulfur cluster binding"/>
    <property type="evidence" value="ECO:0007669"/>
    <property type="project" value="UniProtKB-KW"/>
</dbReference>
<dbReference type="GO" id="GO:0005506">
    <property type="term" value="F:iron ion binding"/>
    <property type="evidence" value="ECO:0007669"/>
    <property type="project" value="UniProtKB-UniRule"/>
</dbReference>
<dbReference type="GO" id="GO:0050136">
    <property type="term" value="F:NADH:ubiquinone reductase (non-electrogenic) activity"/>
    <property type="evidence" value="ECO:0007669"/>
    <property type="project" value="UniProtKB-UniRule"/>
</dbReference>
<dbReference type="GO" id="GO:0048038">
    <property type="term" value="F:quinone binding"/>
    <property type="evidence" value="ECO:0007669"/>
    <property type="project" value="UniProtKB-KW"/>
</dbReference>
<dbReference type="GO" id="GO:0009060">
    <property type="term" value="P:aerobic respiration"/>
    <property type="evidence" value="ECO:0007669"/>
    <property type="project" value="TreeGrafter"/>
</dbReference>
<dbReference type="Gene3D" id="3.30.70.3270">
    <property type="match status" value="1"/>
</dbReference>
<dbReference type="HAMAP" id="MF_01351">
    <property type="entry name" value="NDH1_NuoI"/>
    <property type="match status" value="1"/>
</dbReference>
<dbReference type="InterPro" id="IPR017896">
    <property type="entry name" value="4Fe4S_Fe-S-bd"/>
</dbReference>
<dbReference type="InterPro" id="IPR017900">
    <property type="entry name" value="4Fe4S_Fe_S_CS"/>
</dbReference>
<dbReference type="InterPro" id="IPR010226">
    <property type="entry name" value="NADH_quinone_OxRdtase_chainI"/>
</dbReference>
<dbReference type="NCBIfam" id="TIGR01971">
    <property type="entry name" value="NuoI"/>
    <property type="match status" value="1"/>
</dbReference>
<dbReference type="NCBIfam" id="NF004537">
    <property type="entry name" value="PRK05888.1-3"/>
    <property type="match status" value="1"/>
</dbReference>
<dbReference type="PANTHER" id="PTHR10849:SF20">
    <property type="entry name" value="NADH DEHYDROGENASE [UBIQUINONE] IRON-SULFUR PROTEIN 8, MITOCHONDRIAL"/>
    <property type="match status" value="1"/>
</dbReference>
<dbReference type="PANTHER" id="PTHR10849">
    <property type="entry name" value="NADH DEHYDROGENASE UBIQUINONE IRON-SULFUR PROTEIN 8, MITOCHONDRIAL"/>
    <property type="match status" value="1"/>
</dbReference>
<dbReference type="Pfam" id="PF12838">
    <property type="entry name" value="Fer4_7"/>
    <property type="match status" value="1"/>
</dbReference>
<dbReference type="SUPFAM" id="SSF54862">
    <property type="entry name" value="4Fe-4S ferredoxins"/>
    <property type="match status" value="1"/>
</dbReference>
<dbReference type="PROSITE" id="PS00198">
    <property type="entry name" value="4FE4S_FER_1"/>
    <property type="match status" value="2"/>
</dbReference>
<dbReference type="PROSITE" id="PS51379">
    <property type="entry name" value="4FE4S_FER_2"/>
    <property type="match status" value="2"/>
</dbReference>
<comment type="function">
    <text evidence="1">NDH-1 shuttles electrons from NADH, via FMN and iron-sulfur (Fe-S) centers, to quinones in the respiratory chain. The immediate electron acceptor for the enzyme in this species is believed to be ubiquinone. Couples the redox reaction to proton translocation (for every two electrons transferred, four hydrogen ions are translocated across the cytoplasmic membrane), and thus conserves the redox energy in a proton gradient.</text>
</comment>
<comment type="catalytic activity">
    <reaction>
        <text>a quinone + NADH + 5 H(+)(in) = a quinol + NAD(+) + 4 H(+)(out)</text>
        <dbReference type="Rhea" id="RHEA:57888"/>
        <dbReference type="ChEBI" id="CHEBI:15378"/>
        <dbReference type="ChEBI" id="CHEBI:24646"/>
        <dbReference type="ChEBI" id="CHEBI:57540"/>
        <dbReference type="ChEBI" id="CHEBI:57945"/>
        <dbReference type="ChEBI" id="CHEBI:132124"/>
    </reaction>
</comment>
<comment type="cofactor">
    <cofactor evidence="1">
        <name>[4Fe-4S] cluster</name>
        <dbReference type="ChEBI" id="CHEBI:49883"/>
    </cofactor>
    <text evidence="1">Binds 2 [4Fe-4S] clusters per subunit.</text>
</comment>
<comment type="subunit">
    <text evidence="1">NDH-1 is composed of 14 different subunits. Subunits NuoA, H, J, K, L, M, N constitute the membrane sector of the complex (By similarity).</text>
</comment>
<comment type="subcellular location">
    <subcellularLocation>
        <location evidence="2">Cell inner membrane</location>
        <topology evidence="2">Peripheral membrane protein</topology>
    </subcellularLocation>
</comment>
<comment type="similarity">
    <text evidence="2">Belongs to the complex I 23 kDa subunit family.</text>
</comment>
<comment type="sequence caution" evidence="2">
    <conflict type="erroneous initiation">
        <sequence resource="EMBL-CDS" id="CAF23291"/>
    </conflict>
</comment>
<feature type="chain" id="PRO_0000245722" description="NADH-quinone oxidoreductase subunit I">
    <location>
        <begin position="1"/>
        <end position="157"/>
    </location>
</feature>
<feature type="domain" description="4Fe-4S ferredoxin-type 1">
    <location>
        <begin position="47"/>
        <end position="78"/>
    </location>
</feature>
<feature type="domain" description="4Fe-4S ferredoxin-type 2">
    <location>
        <begin position="94"/>
        <end position="123"/>
    </location>
</feature>
<feature type="binding site" evidence="1">
    <location>
        <position position="58"/>
    </location>
    <ligand>
        <name>[4Fe-4S] cluster</name>
        <dbReference type="ChEBI" id="CHEBI:49883"/>
        <label>1</label>
    </ligand>
</feature>
<feature type="binding site" evidence="1">
    <location>
        <position position="61"/>
    </location>
    <ligand>
        <name>[4Fe-4S] cluster</name>
        <dbReference type="ChEBI" id="CHEBI:49883"/>
        <label>1</label>
    </ligand>
</feature>
<feature type="binding site" evidence="1">
    <location>
        <position position="64"/>
    </location>
    <ligand>
        <name>[4Fe-4S] cluster</name>
        <dbReference type="ChEBI" id="CHEBI:49883"/>
        <label>1</label>
    </ligand>
</feature>
<feature type="binding site" evidence="1">
    <location>
        <position position="68"/>
    </location>
    <ligand>
        <name>[4Fe-4S] cluster</name>
        <dbReference type="ChEBI" id="CHEBI:49883"/>
        <label>2</label>
    </ligand>
</feature>
<feature type="binding site" evidence="1">
    <location>
        <position position="103"/>
    </location>
    <ligand>
        <name>[4Fe-4S] cluster</name>
        <dbReference type="ChEBI" id="CHEBI:49883"/>
        <label>2</label>
    </ligand>
</feature>
<feature type="binding site" evidence="1">
    <location>
        <position position="106"/>
    </location>
    <ligand>
        <name>[4Fe-4S] cluster</name>
        <dbReference type="ChEBI" id="CHEBI:49883"/>
        <label>2</label>
    </ligand>
</feature>
<feature type="binding site" evidence="1">
    <location>
        <position position="109"/>
    </location>
    <ligand>
        <name>[4Fe-4S] cluster</name>
        <dbReference type="ChEBI" id="CHEBI:49883"/>
        <label>2</label>
    </ligand>
</feature>
<feature type="binding site" evidence="1">
    <location>
        <position position="113"/>
    </location>
    <ligand>
        <name>[4Fe-4S] cluster</name>
        <dbReference type="ChEBI" id="CHEBI:49883"/>
        <label>1</label>
    </ligand>
</feature>
<keyword id="KW-0004">4Fe-4S</keyword>
<keyword id="KW-0997">Cell inner membrane</keyword>
<keyword id="KW-1003">Cell membrane</keyword>
<keyword id="KW-0408">Iron</keyword>
<keyword id="KW-0411">Iron-sulfur</keyword>
<keyword id="KW-0472">Membrane</keyword>
<keyword id="KW-0479">Metal-binding</keyword>
<keyword id="KW-0520">NAD</keyword>
<keyword id="KW-0874">Quinone</keyword>
<keyword id="KW-1185">Reference proteome</keyword>
<keyword id="KW-0677">Repeat</keyword>
<keyword id="KW-1278">Translocase</keyword>
<keyword id="KW-0830">Ubiquinone</keyword>
<accession>Q6MDQ8</accession>
<gene>
    <name type="primary">nuoI</name>
    <name type="synonym">nuo9</name>
    <name type="ordered locus">pc0567</name>
</gene>
<reference key="1">
    <citation type="journal article" date="2004" name="Science">
        <title>Illuminating the evolutionary history of chlamydiae.</title>
        <authorList>
            <person name="Horn M."/>
            <person name="Collingro A."/>
            <person name="Schmitz-Esser S."/>
            <person name="Beier C.L."/>
            <person name="Purkhold U."/>
            <person name="Fartmann B."/>
            <person name="Brandt P."/>
            <person name="Nyakatura G.J."/>
            <person name="Droege M."/>
            <person name="Frishman D."/>
            <person name="Rattei T."/>
            <person name="Mewes H.-W."/>
            <person name="Wagner M."/>
        </authorList>
    </citation>
    <scope>NUCLEOTIDE SEQUENCE [LARGE SCALE GENOMIC DNA]</scope>
    <source>
        <strain>UWE25</strain>
    </source>
</reference>